<dbReference type="EC" id="1.14.99.56" evidence="3"/>
<dbReference type="EMBL" id="MK095628">
    <property type="protein sequence ID" value="QCQ84225.1"/>
    <property type="molecule type" value="mRNA"/>
</dbReference>
<dbReference type="EMBL" id="MK095629">
    <property type="protein sequence ID" value="QCQ84226.1"/>
    <property type="molecule type" value="Genomic_DNA"/>
</dbReference>
<dbReference type="SMR" id="A0A4P8PKE4"/>
<dbReference type="GO" id="GO:0005576">
    <property type="term" value="C:extracellular region"/>
    <property type="evidence" value="ECO:0007669"/>
    <property type="project" value="UniProtKB-SubCell"/>
</dbReference>
<dbReference type="GO" id="GO:0046872">
    <property type="term" value="F:metal ion binding"/>
    <property type="evidence" value="ECO:0007669"/>
    <property type="project" value="UniProtKB-KW"/>
</dbReference>
<dbReference type="GO" id="GO:0004497">
    <property type="term" value="F:monooxygenase activity"/>
    <property type="evidence" value="ECO:0007669"/>
    <property type="project" value="UniProtKB-KW"/>
</dbReference>
<dbReference type="GO" id="GO:0030245">
    <property type="term" value="P:cellulose catabolic process"/>
    <property type="evidence" value="ECO:0007669"/>
    <property type="project" value="UniProtKB-KW"/>
</dbReference>
<dbReference type="CDD" id="cd21175">
    <property type="entry name" value="LPMO_AA9"/>
    <property type="match status" value="1"/>
</dbReference>
<dbReference type="Gene3D" id="2.70.50.70">
    <property type="match status" value="1"/>
</dbReference>
<dbReference type="InterPro" id="IPR049892">
    <property type="entry name" value="AA9"/>
</dbReference>
<dbReference type="InterPro" id="IPR005103">
    <property type="entry name" value="AA9_LPMO"/>
</dbReference>
<dbReference type="PANTHER" id="PTHR33353:SF10">
    <property type="entry name" value="ENDO-BETA-1,4-GLUCANASE D"/>
    <property type="match status" value="1"/>
</dbReference>
<dbReference type="PANTHER" id="PTHR33353">
    <property type="entry name" value="PUTATIVE (AFU_ORTHOLOGUE AFUA_1G12560)-RELATED"/>
    <property type="match status" value="1"/>
</dbReference>
<dbReference type="Pfam" id="PF03443">
    <property type="entry name" value="AA9"/>
    <property type="match status" value="1"/>
</dbReference>
<keyword id="KW-0119">Carbohydrate metabolism</keyword>
<keyword id="KW-0136">Cellulose degradation</keyword>
<keyword id="KW-0186">Copper</keyword>
<keyword id="KW-1015">Disulfide bond</keyword>
<keyword id="KW-0325">Glycoprotein</keyword>
<keyword id="KW-0479">Metal-binding</keyword>
<keyword id="KW-0503">Monooxygenase</keyword>
<keyword id="KW-0560">Oxidoreductase</keyword>
<keyword id="KW-0624">Polysaccharide degradation</keyword>
<keyword id="KW-0964">Secreted</keyword>
<keyword id="KW-0732">Signal</keyword>
<feature type="signal peptide" evidence="4">
    <location>
        <begin position="1"/>
        <end position="19"/>
    </location>
</feature>
<feature type="chain" id="PRO_5033442131" description="AA9 family lytic polysaccharide monooxygenase C">
    <location>
        <begin position="20"/>
        <end position="232"/>
    </location>
</feature>
<feature type="binding site" evidence="3">
    <location>
        <position position="20"/>
    </location>
    <ligand>
        <name>Cu(2+)</name>
        <dbReference type="ChEBI" id="CHEBI:29036"/>
        <note>catalytic</note>
    </ligand>
</feature>
<feature type="binding site" evidence="3">
    <location>
        <position position="91"/>
    </location>
    <ligand>
        <name>Cu(2+)</name>
        <dbReference type="ChEBI" id="CHEBI:29036"/>
        <note>catalytic</note>
    </ligand>
</feature>
<feature type="binding site" evidence="2">
    <location>
        <position position="166"/>
    </location>
    <ligand>
        <name>O2</name>
        <dbReference type="ChEBI" id="CHEBI:15379"/>
    </ligand>
</feature>
<feature type="binding site" evidence="2">
    <location>
        <position position="175"/>
    </location>
    <ligand>
        <name>O2</name>
        <dbReference type="ChEBI" id="CHEBI:15379"/>
    </ligand>
</feature>
<feature type="binding site" evidence="3">
    <location>
        <position position="177"/>
    </location>
    <ligand>
        <name>Cu(2+)</name>
        <dbReference type="ChEBI" id="CHEBI:29036"/>
        <note>catalytic</note>
    </ligand>
</feature>
<feature type="glycosylation site" description="N-linked (GlcNAc...) asparagine" evidence="5">
    <location>
        <position position="184"/>
    </location>
</feature>
<feature type="disulfide bond" evidence="3">
    <location>
        <begin position="61"/>
        <end position="180"/>
    </location>
</feature>
<proteinExistence type="evidence at protein level"/>
<accession>A0A4P8PKE4</accession>
<comment type="function">
    <text evidence="1">Lytic polysaccharide monooxygenase (LPMO) that depolymerizes crystalline and amorphous polysaccharides via the oxidation of scissile alpha- or beta-(1-4)-glycosidic bonds, yielding C1 or C4 oxidation products (By similarity). Catalysis by LPMOs requires the reduction of the active-site copper from Cu(II) to Cu(I) by a reducing agent and H(2)O(2) or O(2) as a cosubstrate (By similarity).</text>
</comment>
<comment type="catalytic activity">
    <reaction evidence="3">
        <text>[(1-&gt;4)-beta-D-glucosyl]n+m + reduced acceptor + O2 = 4-dehydro-beta-D-glucosyl-[(1-&gt;4)-beta-D-glucosyl]n-1 + [(1-&gt;4)-beta-D-glucosyl]m + acceptor + H2O.</text>
        <dbReference type="EC" id="1.14.99.56"/>
    </reaction>
</comment>
<comment type="cofactor">
    <cofactor evidence="2">
        <name>Cu(2+)</name>
        <dbReference type="ChEBI" id="CHEBI:29036"/>
    </cofactor>
    <text evidence="2">Binds 1 copper ion per subunit.</text>
</comment>
<comment type="subcellular location">
    <subcellularLocation>
        <location evidence="9">Secreted</location>
    </subcellularLocation>
</comment>
<comment type="biotechnology">
    <text evidence="1">Lignocellulose is the most abundant polymeric composite on Earth and is a recalcitrant but promising renewable substrate for industrial biotechnology applications. Together with cellobiose dehydrogenases (CDHs) an enzymatic system capable of oxidative cellulose cleavage is formed, which increases the efficiency of cellulases and put LPMOs at focus of biofuel research.</text>
</comment>
<comment type="similarity">
    <text evidence="8">Belongs to the polysaccharide monooxygenase AA9 family.</text>
</comment>
<organism>
    <name type="scientific">Malbranchea cinnamomea</name>
    <name type="common">Thermophilic fungus</name>
    <name type="synonym">Malbranchea sulfurea</name>
    <dbReference type="NCBI Taxonomy" id="5041"/>
    <lineage>
        <taxon>Eukaryota</taxon>
        <taxon>Fungi</taxon>
        <taxon>Dikarya</taxon>
        <taxon>Ascomycota</taxon>
        <taxon>Pezizomycotina</taxon>
        <taxon>Eurotiomycetes</taxon>
        <taxon>Eurotiomycetidae</taxon>
        <taxon>Onygenales</taxon>
        <taxon>Malbrancheaceae</taxon>
        <taxon>Malbranchea</taxon>
    </lineage>
</organism>
<protein>
    <recommendedName>
        <fullName evidence="6">AA9 family lytic polysaccharide monooxygenase C</fullName>
        <shortName evidence="6">AA9C</shortName>
        <shortName evidence="6">LPMO9C</shortName>
        <ecNumber evidence="3">1.14.99.56</ecNumber>
    </recommendedName>
    <alternativeName>
        <fullName evidence="8">Cellulase LPMO9C</fullName>
    </alternativeName>
    <alternativeName>
        <fullName evidence="8">Endo-beta-1,4-glucanase LPMO9C</fullName>
        <shortName evidence="8">Endoglucanase LPMO9C</shortName>
    </alternativeName>
    <alternativeName>
        <fullName evidence="8">Glycosyl hydrolase 61 family protein LPMO9C</fullName>
    </alternativeName>
</protein>
<evidence type="ECO:0000250" key="1">
    <source>
        <dbReference type="UniProtKB" id="A0A5J6BJN2"/>
    </source>
</evidence>
<evidence type="ECO:0000250" key="2">
    <source>
        <dbReference type="UniProtKB" id="Q1K8B6"/>
    </source>
</evidence>
<evidence type="ECO:0000250" key="3">
    <source>
        <dbReference type="UniProtKB" id="Q7Z9M7"/>
    </source>
</evidence>
<evidence type="ECO:0000255" key="4"/>
<evidence type="ECO:0000255" key="5">
    <source>
        <dbReference type="PROSITE-ProRule" id="PRU00498"/>
    </source>
</evidence>
<evidence type="ECO:0000303" key="6">
    <source>
    </source>
</evidence>
<evidence type="ECO:0000303" key="7">
    <source ref="1"/>
</evidence>
<evidence type="ECO:0000305" key="8"/>
<evidence type="ECO:0000305" key="9">
    <source>
    </source>
</evidence>
<sequence>MKAAVSLALLVAVAGAASAHNIFPNLIVDGTVTGDWEFVRTTANKWSREGLTNVNSESMRCYEEAGRPPSEVKTVKAGSRVGFASQAPIRHIGPVLFYMARVPDGQDVDSWTPSGDVWFKIHQQGPERSESGWTWPTQDQTELFVDIPASVPDGNYLLRIEQIALHDAQYVGGAQFYLACGQINVTGGGSGDPGPKVSFPGAYKPTDPGILLDLHGHPPANYQFPGPAVWQG</sequence>
<gene>
    <name evidence="6" type="primary">LPMO9C</name>
    <name evidence="6" type="synonym">AA9C</name>
    <name evidence="7" type="synonym">LPMO</name>
</gene>
<reference key="1">
    <citation type="submission" date="2018-10" db="EMBL/GenBank/DDBJ databases">
        <title>AA9 LPMOs in Malbranchea cinnamomea.</title>
        <authorList>
            <person name="Huttner S."/>
            <person name="Larsbrink J."/>
            <person name="Olsson L."/>
            <person name="Thanh V.N."/>
        </authorList>
    </citation>
    <scope>NUCLEOTIDE SEQUENCE [MRNA]</scope>
    <source>
        <strain>FCH 10.5</strain>
    </source>
</reference>
<reference key="2">
    <citation type="journal article" date="2019" name="Appl. Environ. Microbiol.">
        <title>Specific xylan activity revealed for AA9 lytic polysaccharide monooxygenases of the thermophilic fungus Malbranchea cinnamomea by functional characterization.</title>
        <authorList>
            <person name="Huettner S."/>
            <person name="Varnai A."/>
            <person name="Petrovic D.M."/>
            <person name="Bach C.X."/>
            <person name="Kim Anh D.T."/>
            <person name="Thanh V.N."/>
            <person name="Eijsink V.G.H."/>
            <person name="Larsbrink J."/>
            <person name="Olsson L."/>
        </authorList>
    </citation>
    <scope>NUCLEOTIDE SEQUENCE [GENOMIC DNA]</scope>
    <scope>FUNCTION</scope>
    <scope>CATALYTIC ACTIVITY</scope>
    <source>
        <strain>FCH 10.5</strain>
    </source>
</reference>
<name>LP9C_MALCI</name>